<protein>
    <recommendedName>
        <fullName>Cytochrome c oxidase subunit 2</fullName>
        <ecNumber>7.1.1.9</ecNumber>
    </recommendedName>
    <alternativeName>
        <fullName>Cytochrome c oxidase polypeptide II</fullName>
    </alternativeName>
</protein>
<accession>P67798</accession>
<accession>C9QNS7</accession>
<accession>P29864</accession>
<geneLocation type="mitochondrion"/>
<feature type="chain" id="PRO_0000183583" description="Cytochrome c oxidase subunit 2">
    <location>
        <begin position="1"/>
        <end position="229"/>
    </location>
</feature>
<feature type="topological domain" description="Mitochondrial intermembrane" evidence="2">
    <location>
        <begin position="1"/>
        <end position="26"/>
    </location>
</feature>
<feature type="transmembrane region" description="Helical" evidence="2">
    <location>
        <begin position="27"/>
        <end position="48"/>
    </location>
</feature>
<feature type="topological domain" description="Mitochondrial matrix" evidence="2">
    <location>
        <begin position="49"/>
        <end position="62"/>
    </location>
</feature>
<feature type="transmembrane region" description="Helical" evidence="2">
    <location>
        <begin position="63"/>
        <end position="82"/>
    </location>
</feature>
<feature type="topological domain" description="Mitochondrial intermembrane" evidence="2">
    <location>
        <begin position="83"/>
        <end position="229"/>
    </location>
</feature>
<feature type="binding site" evidence="1">
    <location>
        <position position="161"/>
    </location>
    <ligand>
        <name>Cu cation</name>
        <dbReference type="ChEBI" id="CHEBI:23378"/>
        <label>A1</label>
    </ligand>
</feature>
<feature type="binding site" evidence="1">
    <location>
        <position position="196"/>
    </location>
    <ligand>
        <name>Cu cation</name>
        <dbReference type="ChEBI" id="CHEBI:23378"/>
        <label>A1</label>
    </ligand>
</feature>
<feature type="binding site" evidence="1">
    <location>
        <position position="196"/>
    </location>
    <ligand>
        <name>Cu cation</name>
        <dbReference type="ChEBI" id="CHEBI:23378"/>
        <label>A2</label>
    </ligand>
</feature>
<feature type="binding site" evidence="1">
    <location>
        <position position="198"/>
    </location>
    <ligand>
        <name>Cu cation</name>
        <dbReference type="ChEBI" id="CHEBI:23378"/>
        <label>A2</label>
    </ligand>
</feature>
<feature type="binding site" evidence="1">
    <location>
        <position position="198"/>
    </location>
    <ligand>
        <name>Mg(2+)</name>
        <dbReference type="ChEBI" id="CHEBI:18420"/>
        <note>ligand shared with subunit 1</note>
    </ligand>
</feature>
<feature type="binding site" evidence="1">
    <location>
        <position position="200"/>
    </location>
    <ligand>
        <name>Cu cation</name>
        <dbReference type="ChEBI" id="CHEBI:23378"/>
        <label>A1</label>
    </ligand>
</feature>
<feature type="binding site" evidence="1">
    <location>
        <position position="200"/>
    </location>
    <ligand>
        <name>Cu cation</name>
        <dbReference type="ChEBI" id="CHEBI:23378"/>
        <label>A2</label>
    </ligand>
</feature>
<feature type="binding site" evidence="1">
    <location>
        <position position="204"/>
    </location>
    <ligand>
        <name>Cu cation</name>
        <dbReference type="ChEBI" id="CHEBI:23378"/>
        <label>A2</label>
    </ligand>
</feature>
<feature type="binding site" evidence="1">
    <location>
        <position position="207"/>
    </location>
    <ligand>
        <name>Cu cation</name>
        <dbReference type="ChEBI" id="CHEBI:23378"/>
        <label>A1</label>
    </ligand>
</feature>
<evidence type="ECO:0000250" key="1">
    <source>
        <dbReference type="UniProtKB" id="P00410"/>
    </source>
</evidence>
<evidence type="ECO:0000255" key="2"/>
<evidence type="ECO:0000305" key="3"/>
<organism>
    <name type="scientific">Drosophila persimilis</name>
    <name type="common">Fruit fly</name>
    <dbReference type="NCBI Taxonomy" id="7234"/>
    <lineage>
        <taxon>Eukaryota</taxon>
        <taxon>Metazoa</taxon>
        <taxon>Ecdysozoa</taxon>
        <taxon>Arthropoda</taxon>
        <taxon>Hexapoda</taxon>
        <taxon>Insecta</taxon>
        <taxon>Pterygota</taxon>
        <taxon>Neoptera</taxon>
        <taxon>Endopterygota</taxon>
        <taxon>Diptera</taxon>
        <taxon>Brachycera</taxon>
        <taxon>Muscomorpha</taxon>
        <taxon>Ephydroidea</taxon>
        <taxon>Drosophilidae</taxon>
        <taxon>Drosophila</taxon>
        <taxon>Sophophora</taxon>
    </lineage>
</organism>
<gene>
    <name type="primary">mt:CoII</name>
    <name type="synonym">CoII</name>
</gene>
<proteinExistence type="inferred from homology"/>
<dbReference type="EC" id="7.1.1.9"/>
<dbReference type="EMBL" id="M95143">
    <property type="protein sequence ID" value="AAA02773.2"/>
    <property type="molecule type" value="Genomic_DNA"/>
</dbReference>
<dbReference type="EMBL" id="BK006337">
    <property type="protein sequence ID" value="DAA06210.1"/>
    <property type="molecule type" value="Genomic_DNA"/>
</dbReference>
<dbReference type="SMR" id="P67798"/>
<dbReference type="STRING" id="7234.P67798"/>
<dbReference type="Proteomes" id="UP000008744">
    <property type="component" value="Mitochondrion"/>
</dbReference>
<dbReference type="GO" id="GO:0005743">
    <property type="term" value="C:mitochondrial inner membrane"/>
    <property type="evidence" value="ECO:0007669"/>
    <property type="project" value="UniProtKB-SubCell"/>
</dbReference>
<dbReference type="GO" id="GO:0005507">
    <property type="term" value="F:copper ion binding"/>
    <property type="evidence" value="ECO:0007669"/>
    <property type="project" value="InterPro"/>
</dbReference>
<dbReference type="GO" id="GO:0004129">
    <property type="term" value="F:cytochrome-c oxidase activity"/>
    <property type="evidence" value="ECO:0007669"/>
    <property type="project" value="UniProtKB-EC"/>
</dbReference>
<dbReference type="GO" id="GO:0042773">
    <property type="term" value="P:ATP synthesis coupled electron transport"/>
    <property type="evidence" value="ECO:0007669"/>
    <property type="project" value="TreeGrafter"/>
</dbReference>
<dbReference type="CDD" id="cd13912">
    <property type="entry name" value="CcO_II_C"/>
    <property type="match status" value="1"/>
</dbReference>
<dbReference type="FunFam" id="1.10.287.90:FF:000006">
    <property type="entry name" value="Cytochrome c oxidase subunit 2"/>
    <property type="match status" value="1"/>
</dbReference>
<dbReference type="FunFam" id="2.60.40.420:FF:000001">
    <property type="entry name" value="Cytochrome c oxidase subunit 2"/>
    <property type="match status" value="1"/>
</dbReference>
<dbReference type="Gene3D" id="1.10.287.90">
    <property type="match status" value="1"/>
</dbReference>
<dbReference type="Gene3D" id="2.60.40.420">
    <property type="entry name" value="Cupredoxins - blue copper proteins"/>
    <property type="match status" value="1"/>
</dbReference>
<dbReference type="InterPro" id="IPR045187">
    <property type="entry name" value="CcO_II"/>
</dbReference>
<dbReference type="InterPro" id="IPR002429">
    <property type="entry name" value="CcO_II-like_C"/>
</dbReference>
<dbReference type="InterPro" id="IPR034210">
    <property type="entry name" value="CcO_II_C"/>
</dbReference>
<dbReference type="InterPro" id="IPR001505">
    <property type="entry name" value="Copper_CuA"/>
</dbReference>
<dbReference type="InterPro" id="IPR008972">
    <property type="entry name" value="Cupredoxin"/>
</dbReference>
<dbReference type="InterPro" id="IPR014222">
    <property type="entry name" value="Cyt_c_oxidase_su2"/>
</dbReference>
<dbReference type="InterPro" id="IPR011759">
    <property type="entry name" value="Cyt_c_oxidase_su2_TM_dom"/>
</dbReference>
<dbReference type="InterPro" id="IPR036257">
    <property type="entry name" value="Cyt_c_oxidase_su2_TM_sf"/>
</dbReference>
<dbReference type="NCBIfam" id="TIGR02866">
    <property type="entry name" value="CoxB"/>
    <property type="match status" value="1"/>
</dbReference>
<dbReference type="PANTHER" id="PTHR22888:SF9">
    <property type="entry name" value="CYTOCHROME C OXIDASE SUBUNIT 2"/>
    <property type="match status" value="1"/>
</dbReference>
<dbReference type="PANTHER" id="PTHR22888">
    <property type="entry name" value="CYTOCHROME C OXIDASE, SUBUNIT II"/>
    <property type="match status" value="1"/>
</dbReference>
<dbReference type="Pfam" id="PF00116">
    <property type="entry name" value="COX2"/>
    <property type="match status" value="1"/>
</dbReference>
<dbReference type="Pfam" id="PF02790">
    <property type="entry name" value="COX2_TM"/>
    <property type="match status" value="1"/>
</dbReference>
<dbReference type="PRINTS" id="PR01166">
    <property type="entry name" value="CYCOXIDASEII"/>
</dbReference>
<dbReference type="SUPFAM" id="SSF49503">
    <property type="entry name" value="Cupredoxins"/>
    <property type="match status" value="1"/>
</dbReference>
<dbReference type="SUPFAM" id="SSF81464">
    <property type="entry name" value="Cytochrome c oxidase subunit II-like, transmembrane region"/>
    <property type="match status" value="1"/>
</dbReference>
<dbReference type="PROSITE" id="PS00078">
    <property type="entry name" value="COX2"/>
    <property type="match status" value="1"/>
</dbReference>
<dbReference type="PROSITE" id="PS50857">
    <property type="entry name" value="COX2_CUA"/>
    <property type="match status" value="1"/>
</dbReference>
<dbReference type="PROSITE" id="PS50999">
    <property type="entry name" value="COX2_TM"/>
    <property type="match status" value="1"/>
</dbReference>
<keyword id="KW-0186">Copper</keyword>
<keyword id="KW-0249">Electron transport</keyword>
<keyword id="KW-0460">Magnesium</keyword>
<keyword id="KW-0472">Membrane</keyword>
<keyword id="KW-0479">Metal-binding</keyword>
<keyword id="KW-0496">Mitochondrion</keyword>
<keyword id="KW-0999">Mitochondrion inner membrane</keyword>
<keyword id="KW-1185">Reference proteome</keyword>
<keyword id="KW-0679">Respiratory chain</keyword>
<keyword id="KW-1278">Translocase</keyword>
<keyword id="KW-0812">Transmembrane</keyword>
<keyword id="KW-1133">Transmembrane helix</keyword>
<keyword id="KW-0813">Transport</keyword>
<sequence>MSTWANLGLQDSASPLMEQLIFFHDHALLILVMITVLVGYLMFMLFFNSYVNRFLLHGQLIEMIWTILPAIILLFIAMPSLRLLYLLDEINEPSITLKSIGHQWYWSYEYSDFNNVEFDSYMIPTNELSNDGFRLLDVDNRIVLPMNSQIRILVTAADVIHSWTVPALGVKVDGTPGRLNQTNFFINRPGLFYGQCSEICGANHSFMPIVIESVPVNYFIKWISNSVNS</sequence>
<comment type="function">
    <text evidence="1">Component of the cytochrome c oxidase, the last enzyme in the mitochondrial electron transport chain which drives oxidative phosphorylation. The respiratory chain contains 3 multisubunit complexes succinate dehydrogenase (complex II, CII), ubiquinol-cytochrome c oxidoreductase (cytochrome b-c1 complex, complex III, CIII) and cytochrome c oxidase (complex IV, CIV), that cooperate to transfer electrons derived from NADH and succinate to molecular oxygen, creating an electrochemical gradient over the inner membrane that drives transmembrane transport and the ATP synthase. Cytochrome c oxidase is the component of the respiratory chain that catalyzes the reduction of oxygen to water. Electrons originating from reduced cytochrome c in the intermembrane space (IMS) are transferred via the dinuclear copper A center (CU(A)) of subunit 2 and heme A of subunit 1 to the active site in subunit 1, a binuclear center (BNC) formed by heme A3 and copper B (CU(B)). The BNC reduces molecular oxygen to 2 water molecules using 4 electrons from cytochrome c in the IMS and 4 protons from the mitochondrial matrix.</text>
</comment>
<comment type="catalytic activity">
    <reaction evidence="1">
        <text>4 Fe(II)-[cytochrome c] + O2 + 8 H(+)(in) = 4 Fe(III)-[cytochrome c] + 2 H2O + 4 H(+)(out)</text>
        <dbReference type="Rhea" id="RHEA:11436"/>
        <dbReference type="Rhea" id="RHEA-COMP:10350"/>
        <dbReference type="Rhea" id="RHEA-COMP:14399"/>
        <dbReference type="ChEBI" id="CHEBI:15377"/>
        <dbReference type="ChEBI" id="CHEBI:15378"/>
        <dbReference type="ChEBI" id="CHEBI:15379"/>
        <dbReference type="ChEBI" id="CHEBI:29033"/>
        <dbReference type="ChEBI" id="CHEBI:29034"/>
        <dbReference type="EC" id="7.1.1.9"/>
    </reaction>
    <physiologicalReaction direction="left-to-right" evidence="1">
        <dbReference type="Rhea" id="RHEA:11437"/>
    </physiologicalReaction>
</comment>
<comment type="cofactor">
    <cofactor evidence="1">
        <name>Cu cation</name>
        <dbReference type="ChEBI" id="CHEBI:23378"/>
    </cofactor>
    <text evidence="1">Binds a dinuclear copper A center per subunit.</text>
</comment>
<comment type="subunit">
    <text evidence="1">Component of the cytochrome c oxidase (complex IV, CIV), a multisubunit enzyme composed of a catalytic core of 3 subunits and several supernumerary subunits. The complex exists as a monomer or a dimer and forms supercomplexes (SCs) in the inner mitochondrial membrane with ubiquinol-cytochrome c oxidoreductase (cytochrome b-c1 complex, complex III, CIII).</text>
</comment>
<comment type="subcellular location">
    <subcellularLocation>
        <location evidence="1">Mitochondrion inner membrane</location>
        <topology evidence="1">Multi-pass membrane protein</topology>
    </subcellularLocation>
</comment>
<comment type="similarity">
    <text evidence="3">Belongs to the cytochrome c oxidase subunit 2 family.</text>
</comment>
<reference key="1">
    <citation type="journal article" date="1993" name="Mol. Biol. Evol.">
        <title>Relationships in the Drosophila obscura species group, inferred from mitochondrial cytochrome oxidase II sequences.</title>
        <authorList>
            <person name="Beckenbach A.T."/>
            <person name="Wei Y.W."/>
            <person name="Liu H."/>
        </authorList>
    </citation>
    <scope>NUCLEOTIDE SEQUENCE [GENOMIC DNA]</scope>
</reference>
<reference key="2">
    <citation type="journal article" date="2007" name="Nature">
        <title>Evolution of genes and genomes on the Drosophila phylogeny.</title>
        <authorList>
            <consortium name="Drosophila 12 genomes consortium"/>
        </authorList>
    </citation>
    <scope>NUCLEOTIDE SEQUENCE [LARGE SCALE GENOMIC DNA]</scope>
    <source>
        <strain>MSH-3 / Tucson 14011-0111.49</strain>
    </source>
</reference>
<reference key="3">
    <citation type="journal article" date="2009" name="J. Mol. Evol.">
        <title>Comparative genomics of Drosophila mtDNA: Novel features of conservation and change across functional domains and lineages.</title>
        <authorList>
            <person name="Montooth K.L."/>
            <person name="Abt D.N."/>
            <person name="Hofmann J.W."/>
            <person name="Rand D.M."/>
        </authorList>
    </citation>
    <scope>IDENTIFICATION</scope>
    <source>
        <strain>MSH-3 / Tucson 14011-0111.49</strain>
    </source>
</reference>
<name>COX2_DROPE</name>